<proteinExistence type="inferred from homology"/>
<feature type="chain" id="PRO_1000072449" description="Large ribosomal subunit protein bL9">
    <location>
        <begin position="1"/>
        <end position="201"/>
    </location>
</feature>
<feature type="region of interest" description="Disordered" evidence="2">
    <location>
        <begin position="150"/>
        <end position="201"/>
    </location>
</feature>
<feature type="compositionally biased region" description="Basic and acidic residues" evidence="2">
    <location>
        <begin position="150"/>
        <end position="165"/>
    </location>
</feature>
<feature type="compositionally biased region" description="Acidic residues" evidence="2">
    <location>
        <begin position="166"/>
        <end position="201"/>
    </location>
</feature>
<protein>
    <recommendedName>
        <fullName evidence="1">Large ribosomal subunit protein bL9</fullName>
    </recommendedName>
    <alternativeName>
        <fullName evidence="3">50S ribosomal protein L9</fullName>
    </alternativeName>
</protein>
<comment type="function">
    <text evidence="1">Binds to the 23S rRNA.</text>
</comment>
<comment type="similarity">
    <text evidence="1">Belongs to the bacterial ribosomal protein bL9 family.</text>
</comment>
<organism>
    <name type="scientific">Parvibaculum lavamentivorans (strain DS-1 / DSM 13023 / NCIMB 13966)</name>
    <dbReference type="NCBI Taxonomy" id="402881"/>
    <lineage>
        <taxon>Bacteria</taxon>
        <taxon>Pseudomonadati</taxon>
        <taxon>Pseudomonadota</taxon>
        <taxon>Alphaproteobacteria</taxon>
        <taxon>Hyphomicrobiales</taxon>
        <taxon>Parvibaculaceae</taxon>
        <taxon>Parvibaculum</taxon>
    </lineage>
</organism>
<gene>
    <name evidence="1" type="primary">rplI</name>
    <name type="ordered locus">Plav_3363</name>
</gene>
<accession>A7HYI4</accession>
<evidence type="ECO:0000255" key="1">
    <source>
        <dbReference type="HAMAP-Rule" id="MF_00503"/>
    </source>
</evidence>
<evidence type="ECO:0000256" key="2">
    <source>
        <dbReference type="SAM" id="MobiDB-lite"/>
    </source>
</evidence>
<evidence type="ECO:0000305" key="3"/>
<name>RL9_PARL1</name>
<keyword id="KW-1185">Reference proteome</keyword>
<keyword id="KW-0687">Ribonucleoprotein</keyword>
<keyword id="KW-0689">Ribosomal protein</keyword>
<keyword id="KW-0694">RNA-binding</keyword>
<keyword id="KW-0699">rRNA-binding</keyword>
<reference key="1">
    <citation type="journal article" date="2011" name="Stand. Genomic Sci.">
        <title>Complete genome sequence of Parvibaculum lavamentivorans type strain (DS-1(T)).</title>
        <authorList>
            <person name="Schleheck D."/>
            <person name="Weiss M."/>
            <person name="Pitluck S."/>
            <person name="Bruce D."/>
            <person name="Land M.L."/>
            <person name="Han S."/>
            <person name="Saunders E."/>
            <person name="Tapia R."/>
            <person name="Detter C."/>
            <person name="Brettin T."/>
            <person name="Han J."/>
            <person name="Woyke T."/>
            <person name="Goodwin L."/>
            <person name="Pennacchio L."/>
            <person name="Nolan M."/>
            <person name="Cook A.M."/>
            <person name="Kjelleberg S."/>
            <person name="Thomas T."/>
        </authorList>
    </citation>
    <scope>NUCLEOTIDE SEQUENCE [LARGE SCALE GENOMIC DNA]</scope>
    <source>
        <strain>DS-1 / DSM 13023 / NCIMB 13966</strain>
    </source>
</reference>
<sequence length="201" mass="22323">MQVVLLERVEKLGQMGDVVKVKDGFARNFLLPRKKALRATKANIERFEGQRAQLEARNLELKKEAEQVHTKVHGQSFIILRQAGETGILYGSVSTRDIATAMTDGGFTAARNQVVLDKPIKTIGLHDVRIVLHPEVSATIAINVARTQEEAERQAAGEDLTQRRDDEEEEAVEAAEFFESEELAPGDEEEEAAGEEEDAKE</sequence>
<dbReference type="EMBL" id="CP000774">
    <property type="protein sequence ID" value="ABS64967.1"/>
    <property type="molecule type" value="Genomic_DNA"/>
</dbReference>
<dbReference type="RefSeq" id="WP_012112298.1">
    <property type="nucleotide sequence ID" value="NC_009719.1"/>
</dbReference>
<dbReference type="SMR" id="A7HYI4"/>
<dbReference type="STRING" id="402881.Plav_3363"/>
<dbReference type="KEGG" id="pla:Plav_3363"/>
<dbReference type="eggNOG" id="COG0359">
    <property type="taxonomic scope" value="Bacteria"/>
</dbReference>
<dbReference type="HOGENOM" id="CLU_078938_1_0_5"/>
<dbReference type="OrthoDB" id="9788336at2"/>
<dbReference type="Proteomes" id="UP000006377">
    <property type="component" value="Chromosome"/>
</dbReference>
<dbReference type="GO" id="GO:1990904">
    <property type="term" value="C:ribonucleoprotein complex"/>
    <property type="evidence" value="ECO:0007669"/>
    <property type="project" value="UniProtKB-KW"/>
</dbReference>
<dbReference type="GO" id="GO:0005840">
    <property type="term" value="C:ribosome"/>
    <property type="evidence" value="ECO:0007669"/>
    <property type="project" value="UniProtKB-KW"/>
</dbReference>
<dbReference type="GO" id="GO:0019843">
    <property type="term" value="F:rRNA binding"/>
    <property type="evidence" value="ECO:0007669"/>
    <property type="project" value="UniProtKB-UniRule"/>
</dbReference>
<dbReference type="GO" id="GO:0003735">
    <property type="term" value="F:structural constituent of ribosome"/>
    <property type="evidence" value="ECO:0007669"/>
    <property type="project" value="InterPro"/>
</dbReference>
<dbReference type="GO" id="GO:0006412">
    <property type="term" value="P:translation"/>
    <property type="evidence" value="ECO:0007669"/>
    <property type="project" value="UniProtKB-UniRule"/>
</dbReference>
<dbReference type="Gene3D" id="3.10.430.100">
    <property type="entry name" value="Ribosomal protein L9, C-terminal domain"/>
    <property type="match status" value="1"/>
</dbReference>
<dbReference type="Gene3D" id="3.40.5.10">
    <property type="entry name" value="Ribosomal protein L9, N-terminal domain"/>
    <property type="match status" value="1"/>
</dbReference>
<dbReference type="HAMAP" id="MF_00503">
    <property type="entry name" value="Ribosomal_bL9"/>
    <property type="match status" value="1"/>
</dbReference>
<dbReference type="InterPro" id="IPR000244">
    <property type="entry name" value="Ribosomal_bL9"/>
</dbReference>
<dbReference type="InterPro" id="IPR009027">
    <property type="entry name" value="Ribosomal_bL9/RNase_H1_N"/>
</dbReference>
<dbReference type="InterPro" id="IPR020594">
    <property type="entry name" value="Ribosomal_bL9_bac/chp"/>
</dbReference>
<dbReference type="InterPro" id="IPR020069">
    <property type="entry name" value="Ribosomal_bL9_C"/>
</dbReference>
<dbReference type="InterPro" id="IPR036791">
    <property type="entry name" value="Ribosomal_bL9_C_sf"/>
</dbReference>
<dbReference type="InterPro" id="IPR020070">
    <property type="entry name" value="Ribosomal_bL9_N"/>
</dbReference>
<dbReference type="InterPro" id="IPR036935">
    <property type="entry name" value="Ribosomal_bL9_N_sf"/>
</dbReference>
<dbReference type="NCBIfam" id="TIGR00158">
    <property type="entry name" value="L9"/>
    <property type="match status" value="1"/>
</dbReference>
<dbReference type="PANTHER" id="PTHR21368">
    <property type="entry name" value="50S RIBOSOMAL PROTEIN L9"/>
    <property type="match status" value="1"/>
</dbReference>
<dbReference type="Pfam" id="PF03948">
    <property type="entry name" value="Ribosomal_L9_C"/>
    <property type="match status" value="1"/>
</dbReference>
<dbReference type="Pfam" id="PF01281">
    <property type="entry name" value="Ribosomal_L9_N"/>
    <property type="match status" value="1"/>
</dbReference>
<dbReference type="SUPFAM" id="SSF55658">
    <property type="entry name" value="L9 N-domain-like"/>
    <property type="match status" value="1"/>
</dbReference>
<dbReference type="SUPFAM" id="SSF55653">
    <property type="entry name" value="Ribosomal protein L9 C-domain"/>
    <property type="match status" value="1"/>
</dbReference>
<dbReference type="PROSITE" id="PS00651">
    <property type="entry name" value="RIBOSOMAL_L9"/>
    <property type="match status" value="1"/>
</dbReference>